<name>PSTB_TROW8</name>
<evidence type="ECO:0000255" key="1">
    <source>
        <dbReference type="HAMAP-Rule" id="MF_01702"/>
    </source>
</evidence>
<feature type="chain" id="PRO_0000092922" description="Phosphate import ATP-binding protein PstB">
    <location>
        <begin position="1"/>
        <end position="257"/>
    </location>
</feature>
<feature type="domain" description="ABC transporter" evidence="1">
    <location>
        <begin position="5"/>
        <end position="246"/>
    </location>
</feature>
<feature type="binding site" evidence="1">
    <location>
        <begin position="37"/>
        <end position="44"/>
    </location>
    <ligand>
        <name>ATP</name>
        <dbReference type="ChEBI" id="CHEBI:30616"/>
    </ligand>
</feature>
<sequence length="257" mass="28509">MTSLLEIKDLTAFYGPLRAIKDVSLSIQEGSVTALIGPSGCGKSTLLRTLNRMHELSPGAKVKGQVLLDGRDLYQLDPVYVRQEVGMISQRPNPFPTMSIRENVLAGIKLNRKRIHRIQQNELMERCLRSVNLWDEVHNRLGRPGGELSGGQQQRLCIARAIAVSPRVILMDEPCSALDPVSTKAIEQLICKLKEKHTIVIVTHNMQQASRVSDWTAVFNVARSGGSGELVEHDKTEVIFTSPKNEVTLNYISGKFG</sequence>
<keyword id="KW-0067">ATP-binding</keyword>
<keyword id="KW-1003">Cell membrane</keyword>
<keyword id="KW-0472">Membrane</keyword>
<keyword id="KW-0547">Nucleotide-binding</keyword>
<keyword id="KW-0592">Phosphate transport</keyword>
<keyword id="KW-1278">Translocase</keyword>
<keyword id="KW-0813">Transport</keyword>
<proteinExistence type="inferred from homology"/>
<comment type="function">
    <text evidence="1">Part of the ABC transporter complex PstSACB involved in phosphate import. Responsible for energy coupling to the transport system.</text>
</comment>
<comment type="catalytic activity">
    <reaction evidence="1">
        <text>phosphate(out) + ATP + H2O = ADP + 2 phosphate(in) + H(+)</text>
        <dbReference type="Rhea" id="RHEA:24440"/>
        <dbReference type="ChEBI" id="CHEBI:15377"/>
        <dbReference type="ChEBI" id="CHEBI:15378"/>
        <dbReference type="ChEBI" id="CHEBI:30616"/>
        <dbReference type="ChEBI" id="CHEBI:43474"/>
        <dbReference type="ChEBI" id="CHEBI:456216"/>
        <dbReference type="EC" id="7.3.2.1"/>
    </reaction>
</comment>
<comment type="subunit">
    <text evidence="1">The complex is composed of two ATP-binding proteins (PstB), two transmembrane proteins (PstC and PstA) and a solute-binding protein (PstS).</text>
</comment>
<comment type="subcellular location">
    <subcellularLocation>
        <location evidence="1">Cell membrane</location>
        <topology evidence="1">Peripheral membrane protein</topology>
    </subcellularLocation>
</comment>
<comment type="similarity">
    <text evidence="1">Belongs to the ABC transporter superfamily. Phosphate importer (TC 3.A.1.7) family.</text>
</comment>
<protein>
    <recommendedName>
        <fullName evidence="1">Phosphate import ATP-binding protein PstB</fullName>
        <ecNumber evidence="1">7.3.2.1</ecNumber>
    </recommendedName>
    <alternativeName>
        <fullName evidence="1">ABC phosphate transporter</fullName>
    </alternativeName>
    <alternativeName>
        <fullName evidence="1">Phosphate-transporting ATPase</fullName>
    </alternativeName>
</protein>
<gene>
    <name evidence="1" type="primary">pstB</name>
    <name type="ordered locus">TW418</name>
</gene>
<reference key="1">
    <citation type="journal article" date="2003" name="Lancet">
        <title>Sequencing and analysis of the genome of the Whipple's disease bacterium Tropheryma whipplei.</title>
        <authorList>
            <person name="Bentley S.D."/>
            <person name="Maiwald M."/>
            <person name="Murphy L.D."/>
            <person name="Pallen M.J."/>
            <person name="Yeats C.A."/>
            <person name="Dover L.G."/>
            <person name="Norbertczak H.T."/>
            <person name="Besra G.S."/>
            <person name="Quail M.A."/>
            <person name="Harris D.E."/>
            <person name="von Herbay A."/>
            <person name="Goble A."/>
            <person name="Rutter S."/>
            <person name="Squares R."/>
            <person name="Squares S."/>
            <person name="Barrell B.G."/>
            <person name="Parkhill J."/>
            <person name="Relman D.A."/>
        </authorList>
    </citation>
    <scope>NUCLEOTIDE SEQUENCE [LARGE SCALE GENOMIC DNA]</scope>
    <source>
        <strain>TW08/27</strain>
    </source>
</reference>
<accession>Q83HT1</accession>
<dbReference type="EC" id="7.3.2.1" evidence="1"/>
<dbReference type="EMBL" id="BX251411">
    <property type="protein sequence ID" value="CAD67088.1"/>
    <property type="molecule type" value="Genomic_DNA"/>
</dbReference>
<dbReference type="RefSeq" id="WP_011096368.1">
    <property type="nucleotide sequence ID" value="NC_004551.1"/>
</dbReference>
<dbReference type="SMR" id="Q83HT1"/>
<dbReference type="GeneID" id="67388195"/>
<dbReference type="KEGG" id="tws:TW418"/>
<dbReference type="HOGENOM" id="CLU_000604_1_22_11"/>
<dbReference type="GO" id="GO:0005886">
    <property type="term" value="C:plasma membrane"/>
    <property type="evidence" value="ECO:0007669"/>
    <property type="project" value="UniProtKB-SubCell"/>
</dbReference>
<dbReference type="GO" id="GO:0005524">
    <property type="term" value="F:ATP binding"/>
    <property type="evidence" value="ECO:0007669"/>
    <property type="project" value="UniProtKB-KW"/>
</dbReference>
<dbReference type="GO" id="GO:0016887">
    <property type="term" value="F:ATP hydrolysis activity"/>
    <property type="evidence" value="ECO:0007669"/>
    <property type="project" value="InterPro"/>
</dbReference>
<dbReference type="GO" id="GO:0015415">
    <property type="term" value="F:ATPase-coupled phosphate ion transmembrane transporter activity"/>
    <property type="evidence" value="ECO:0007669"/>
    <property type="project" value="UniProtKB-EC"/>
</dbReference>
<dbReference type="GO" id="GO:0035435">
    <property type="term" value="P:phosphate ion transmembrane transport"/>
    <property type="evidence" value="ECO:0007669"/>
    <property type="project" value="InterPro"/>
</dbReference>
<dbReference type="CDD" id="cd03260">
    <property type="entry name" value="ABC_PstB_phosphate_transporter"/>
    <property type="match status" value="1"/>
</dbReference>
<dbReference type="Gene3D" id="3.40.50.300">
    <property type="entry name" value="P-loop containing nucleotide triphosphate hydrolases"/>
    <property type="match status" value="1"/>
</dbReference>
<dbReference type="InterPro" id="IPR003593">
    <property type="entry name" value="AAA+_ATPase"/>
</dbReference>
<dbReference type="InterPro" id="IPR003439">
    <property type="entry name" value="ABC_transporter-like_ATP-bd"/>
</dbReference>
<dbReference type="InterPro" id="IPR017871">
    <property type="entry name" value="ABC_transporter-like_CS"/>
</dbReference>
<dbReference type="InterPro" id="IPR027417">
    <property type="entry name" value="P-loop_NTPase"/>
</dbReference>
<dbReference type="InterPro" id="IPR005670">
    <property type="entry name" value="PstB-like"/>
</dbReference>
<dbReference type="PANTHER" id="PTHR43423">
    <property type="entry name" value="ABC TRANSPORTER I FAMILY MEMBER 17"/>
    <property type="match status" value="1"/>
</dbReference>
<dbReference type="PANTHER" id="PTHR43423:SF1">
    <property type="entry name" value="ABC TRANSPORTER I FAMILY MEMBER 17"/>
    <property type="match status" value="1"/>
</dbReference>
<dbReference type="Pfam" id="PF00005">
    <property type="entry name" value="ABC_tran"/>
    <property type="match status" value="1"/>
</dbReference>
<dbReference type="SMART" id="SM00382">
    <property type="entry name" value="AAA"/>
    <property type="match status" value="1"/>
</dbReference>
<dbReference type="SUPFAM" id="SSF52540">
    <property type="entry name" value="P-loop containing nucleoside triphosphate hydrolases"/>
    <property type="match status" value="1"/>
</dbReference>
<dbReference type="PROSITE" id="PS00211">
    <property type="entry name" value="ABC_TRANSPORTER_1"/>
    <property type="match status" value="1"/>
</dbReference>
<dbReference type="PROSITE" id="PS50893">
    <property type="entry name" value="ABC_TRANSPORTER_2"/>
    <property type="match status" value="1"/>
</dbReference>
<dbReference type="PROSITE" id="PS51238">
    <property type="entry name" value="PSTB"/>
    <property type="match status" value="1"/>
</dbReference>
<organism>
    <name type="scientific">Tropheryma whipplei (strain TW08/27)</name>
    <name type="common">Whipple's bacillus</name>
    <dbReference type="NCBI Taxonomy" id="218496"/>
    <lineage>
        <taxon>Bacteria</taxon>
        <taxon>Bacillati</taxon>
        <taxon>Actinomycetota</taxon>
        <taxon>Actinomycetes</taxon>
        <taxon>Micrococcales</taxon>
        <taxon>Tropherymataceae</taxon>
        <taxon>Tropheryma</taxon>
    </lineage>
</organism>